<organism evidence="6">
    <name type="scientific">Entamoeba histolytica (strain ATCC 30459 / HM-1:IMSS / ABRM)</name>
    <dbReference type="NCBI Taxonomy" id="294381"/>
    <lineage>
        <taxon>Eukaryota</taxon>
        <taxon>Amoebozoa</taxon>
        <taxon>Evosea</taxon>
        <taxon>Archamoebae</taxon>
        <taxon>Mastigamoebida</taxon>
        <taxon>Entamoebidae</taxon>
        <taxon>Entamoeba</taxon>
    </lineage>
</organism>
<name>RL8_ENTH1</name>
<reference evidence="5" key="1">
    <citation type="submission" date="2012-06" db="EMBL/GenBank/DDBJ databases">
        <title>Short 5' UTR of Entamoeba genes.</title>
        <authorList>
            <person name="Hiranuka K."/>
            <person name="Kumagai M."/>
            <person name="Wakaguri H."/>
            <person name="Suzuki Y."/>
            <person name="Sugano S."/>
            <person name="Watanabe J."/>
            <person name="Makioka A."/>
        </authorList>
    </citation>
    <scope>NUCLEOTIDE SEQUENCE [MRNA]</scope>
    <source>
        <strain evidence="5">ATCC 30459 / HM-1:IMSS / ABRM</strain>
    </source>
</reference>
<reference evidence="6" key="2">
    <citation type="journal article" date="2005" name="Nature">
        <title>The genome of the protist parasite Entamoeba histolytica.</title>
        <authorList>
            <person name="Loftus B.J."/>
            <person name="Anderson I."/>
            <person name="Davies R."/>
            <person name="Alsmark U.C."/>
            <person name="Samuelson J."/>
            <person name="Amedeo P."/>
            <person name="Roncaglia P."/>
            <person name="Berriman M."/>
            <person name="Hirt R.P."/>
            <person name="Mann B.J."/>
            <person name="Nozaki T."/>
            <person name="Suh B."/>
            <person name="Pop M."/>
            <person name="Duchene M."/>
            <person name="Ackers J."/>
            <person name="Tannich E."/>
            <person name="Leippe M."/>
            <person name="Hofer M."/>
            <person name="Bruchhaus I."/>
            <person name="Willhoeft U."/>
            <person name="Bhattacharya A."/>
            <person name="Chillingworth T."/>
            <person name="Churcher C.M."/>
            <person name="Hance Z."/>
            <person name="Harris B."/>
            <person name="Harris D."/>
            <person name="Jagels K."/>
            <person name="Moule S."/>
            <person name="Mungall K.L."/>
            <person name="Ormond D."/>
            <person name="Squares R."/>
            <person name="Whitehead S."/>
            <person name="Quail M.A."/>
            <person name="Rabbinowitsch E."/>
            <person name="Norbertczak H."/>
            <person name="Price C."/>
            <person name="Wang Z."/>
            <person name="Guillen N."/>
            <person name="Gilchrist C."/>
            <person name="Stroup S.E."/>
            <person name="Bhattacharya S."/>
            <person name="Lohia A."/>
            <person name="Foster P.G."/>
            <person name="Sicheritz-Ponten T."/>
            <person name="Weber C."/>
            <person name="Singh U."/>
            <person name="Mukherjee C."/>
            <person name="El-Sayed N.M.A."/>
            <person name="Petri W.A."/>
            <person name="Clark C.G."/>
            <person name="Embley T.M."/>
            <person name="Barrell B.G."/>
            <person name="Fraser C.M."/>
            <person name="Hall N."/>
        </authorList>
    </citation>
    <scope>NUCLEOTIDE SEQUENCE [LARGE SCALE GENOMIC DNA]</scope>
    <source>
        <strain evidence="6">ATCC 30459 / HM-1:IMSS / ABRM</strain>
    </source>
</reference>
<reference evidence="4" key="3">
    <citation type="journal article" date="1997" name="Biochem. Biophys. Res. Commun.">
        <title>Analysis of expressed sequence tags (ESTs) of the parasitic protozoa Entamoeba histolytica.</title>
        <authorList>
            <person name="Tanaka T."/>
            <person name="Tanaka M."/>
            <person name="Mitsui Y."/>
        </authorList>
    </citation>
    <scope>NUCLEOTIDE SEQUENCE [MRNA] OF 42-155</scope>
    <source>
        <strain evidence="4">ATCC 30459 / HM-1:IMSS / ABRM</strain>
    </source>
</reference>
<protein>
    <recommendedName>
        <fullName evidence="3">Large ribosomal subunit protein uL2</fullName>
    </recommendedName>
    <alternativeName>
        <fullName>60S ribosomal protein L2</fullName>
    </alternativeName>
    <alternativeName>
        <fullName>60S ribosomal protein L8</fullName>
    </alternativeName>
</protein>
<keyword id="KW-0963">Cytoplasm</keyword>
<keyword id="KW-1185">Reference proteome</keyword>
<keyword id="KW-0687">Ribonucleoprotein</keyword>
<keyword id="KW-0689">Ribosomal protein</keyword>
<accession>O15574</accession>
<accession>S0AW89</accession>
<feature type="chain" id="PRO_0000129732" description="Large ribosomal subunit protein uL2">
    <location>
        <begin position="1"/>
        <end position="257"/>
    </location>
</feature>
<feature type="region of interest" description="Disordered" evidence="2">
    <location>
        <begin position="207"/>
        <end position="257"/>
    </location>
</feature>
<sequence>MGRRTLSQRKGRGSIFKSRSHHKLGVAQHRAIDFFERHSTVRGLVKSIEHDPGRGAPLARVVFRNPRQYGLDKELFICAEGLYSGQYIYCGSKASLHIGNVLPIGQCPEGTVVCNVESKPGDRGIIARASGNYATVISHNADNETTRIRLPSGAKKTLKSNCRAMVGIIAGGGRTEKPILKAGVAYRMYKAKRTTWPRVRGVAMNPVDHPHGGGNHQHVGHPTTLKRSSPPGQKAGKVAARRTGLIRGGNKEGAADN</sequence>
<comment type="function">
    <text evidence="1">Component of the large ribosomal subunit. The ribosome is a large ribonucleoprotein complex responsible for the synthesis of proteins in the cell.</text>
</comment>
<comment type="subunit">
    <text evidence="1">Component of the large ribosomal subunit.</text>
</comment>
<comment type="subcellular location">
    <subcellularLocation>
        <location evidence="1">Cytoplasm</location>
    </subcellularLocation>
</comment>
<comment type="similarity">
    <text evidence="3">Belongs to the universal ribosomal protein uL2 family.</text>
</comment>
<comment type="sequence caution" evidence="3">
    <conflict type="miscellaneous discrepancy">
        <sequence resource="EMBL-CDS" id="BAA21969"/>
    </conflict>
    <text>Probable cloning artifact.</text>
</comment>
<gene>
    <name type="primary">RPL8</name>
    <name type="synonym">RPL2</name>
    <name evidence="6" type="ORF">EHI_127200</name>
</gene>
<dbReference type="EMBL" id="AK419230">
    <property type="protein sequence ID" value="BAN37929.1"/>
    <property type="molecule type" value="mRNA"/>
</dbReference>
<dbReference type="EMBL" id="AK419293">
    <property type="protein sequence ID" value="BAN37984.1"/>
    <property type="molecule type" value="mRNA"/>
</dbReference>
<dbReference type="EMBL" id="AK419547">
    <property type="protein sequence ID" value="BAN38216.1"/>
    <property type="molecule type" value="mRNA"/>
</dbReference>
<dbReference type="EMBL" id="AK420028">
    <property type="protein sequence ID" value="BAN38658.1"/>
    <property type="molecule type" value="mRNA"/>
</dbReference>
<dbReference type="EMBL" id="AK420456">
    <property type="protein sequence ID" value="BAN39068.1"/>
    <property type="molecule type" value="mRNA"/>
</dbReference>
<dbReference type="EMBL" id="AK420516">
    <property type="protein sequence ID" value="BAN39124.1"/>
    <property type="molecule type" value="mRNA"/>
</dbReference>
<dbReference type="EMBL" id="AK420795">
    <property type="protein sequence ID" value="BAN39383.1"/>
    <property type="molecule type" value="mRNA"/>
</dbReference>
<dbReference type="EMBL" id="AK420970">
    <property type="protein sequence ID" value="BAN39548.1"/>
    <property type="molecule type" value="mRNA"/>
</dbReference>
<dbReference type="EMBL" id="AK421271">
    <property type="protein sequence ID" value="BAN39832.1"/>
    <property type="molecule type" value="mRNA"/>
</dbReference>
<dbReference type="EMBL" id="AK421433">
    <property type="protein sequence ID" value="BAN39987.1"/>
    <property type="molecule type" value="mRNA"/>
</dbReference>
<dbReference type="EMBL" id="DS571166">
    <property type="protein sequence ID" value="EAL50459.1"/>
    <property type="molecule type" value="Genomic_DNA"/>
</dbReference>
<dbReference type="EMBL" id="AB002705">
    <property type="protein sequence ID" value="BAA21969.1"/>
    <property type="status" value="ALT_SEQ"/>
    <property type="molecule type" value="mRNA"/>
</dbReference>
<dbReference type="RefSeq" id="XP_652173.1">
    <property type="nucleotide sequence ID" value="XM_647081.2"/>
</dbReference>
<dbReference type="RefSeq" id="XP_652988.1">
    <property type="nucleotide sequence ID" value="XM_647896.2"/>
</dbReference>
<dbReference type="RefSeq" id="XP_655845.1">
    <property type="nucleotide sequence ID" value="XM_650753.2"/>
</dbReference>
<dbReference type="SMR" id="O15574"/>
<dbReference type="GeneID" id="3410163"/>
<dbReference type="KEGG" id="ehi:EHI_127200"/>
<dbReference type="KEGG" id="ehi:EHI_150470"/>
<dbReference type="KEGG" id="ehi:EHI_181180"/>
<dbReference type="VEuPathDB" id="AmoebaDB:EHI_127200"/>
<dbReference type="eggNOG" id="KOG2309">
    <property type="taxonomic scope" value="Eukaryota"/>
</dbReference>
<dbReference type="HOGENOM" id="CLU_036235_0_3_1"/>
<dbReference type="OMA" id="GGRHPCT"/>
<dbReference type="OrthoDB" id="10267824at2759"/>
<dbReference type="Proteomes" id="UP000001926">
    <property type="component" value="Partially assembled WGS sequence"/>
</dbReference>
<dbReference type="GO" id="GO:0022625">
    <property type="term" value="C:cytosolic large ribosomal subunit"/>
    <property type="evidence" value="ECO:0000318"/>
    <property type="project" value="GO_Central"/>
</dbReference>
<dbReference type="GO" id="GO:0003723">
    <property type="term" value="F:RNA binding"/>
    <property type="evidence" value="ECO:0000318"/>
    <property type="project" value="GO_Central"/>
</dbReference>
<dbReference type="GO" id="GO:0003735">
    <property type="term" value="F:structural constituent of ribosome"/>
    <property type="evidence" value="ECO:0000318"/>
    <property type="project" value="GO_Central"/>
</dbReference>
<dbReference type="GO" id="GO:0002181">
    <property type="term" value="P:cytoplasmic translation"/>
    <property type="evidence" value="ECO:0000318"/>
    <property type="project" value="GO_Central"/>
</dbReference>
<dbReference type="FunFam" id="2.40.50.140:FF:000020">
    <property type="entry name" value="60S ribosomal protein L2"/>
    <property type="match status" value="1"/>
</dbReference>
<dbReference type="FunFam" id="4.10.950.10:FF:000002">
    <property type="entry name" value="60S ribosomal protein L2"/>
    <property type="match status" value="1"/>
</dbReference>
<dbReference type="FunFam" id="2.30.30.30:FF:000006">
    <property type="entry name" value="60S ribosomal protein L8"/>
    <property type="match status" value="1"/>
</dbReference>
<dbReference type="Gene3D" id="2.30.30.30">
    <property type="match status" value="1"/>
</dbReference>
<dbReference type="Gene3D" id="2.40.50.140">
    <property type="entry name" value="Nucleic acid-binding proteins"/>
    <property type="match status" value="1"/>
</dbReference>
<dbReference type="Gene3D" id="4.10.950.10">
    <property type="entry name" value="Ribosomal protein L2, domain 3"/>
    <property type="match status" value="1"/>
</dbReference>
<dbReference type="HAMAP" id="MF_01320_A">
    <property type="entry name" value="Ribosomal_uL2_A"/>
    <property type="match status" value="1"/>
</dbReference>
<dbReference type="InterPro" id="IPR012340">
    <property type="entry name" value="NA-bd_OB-fold"/>
</dbReference>
<dbReference type="InterPro" id="IPR014722">
    <property type="entry name" value="Rib_uL2_dom2"/>
</dbReference>
<dbReference type="InterPro" id="IPR002171">
    <property type="entry name" value="Ribosomal_uL2"/>
</dbReference>
<dbReference type="InterPro" id="IPR023672">
    <property type="entry name" value="Ribosomal_uL2_arc_euk"/>
</dbReference>
<dbReference type="InterPro" id="IPR022669">
    <property type="entry name" value="Ribosomal_uL2_C"/>
</dbReference>
<dbReference type="InterPro" id="IPR022671">
    <property type="entry name" value="Ribosomal_uL2_CS"/>
</dbReference>
<dbReference type="InterPro" id="IPR014726">
    <property type="entry name" value="Ribosomal_uL2_dom3"/>
</dbReference>
<dbReference type="InterPro" id="IPR022666">
    <property type="entry name" value="Ribosomal_uL2_RNA-bd_dom"/>
</dbReference>
<dbReference type="InterPro" id="IPR008991">
    <property type="entry name" value="Translation_prot_SH3-like_sf"/>
</dbReference>
<dbReference type="NCBIfam" id="NF007180">
    <property type="entry name" value="PRK09612.1"/>
    <property type="match status" value="1"/>
</dbReference>
<dbReference type="PANTHER" id="PTHR13691:SF16">
    <property type="entry name" value="LARGE RIBOSOMAL SUBUNIT PROTEIN UL2"/>
    <property type="match status" value="1"/>
</dbReference>
<dbReference type="PANTHER" id="PTHR13691">
    <property type="entry name" value="RIBOSOMAL PROTEIN L2"/>
    <property type="match status" value="1"/>
</dbReference>
<dbReference type="Pfam" id="PF00181">
    <property type="entry name" value="Ribosomal_L2"/>
    <property type="match status" value="1"/>
</dbReference>
<dbReference type="Pfam" id="PF03947">
    <property type="entry name" value="Ribosomal_L2_C"/>
    <property type="match status" value="1"/>
</dbReference>
<dbReference type="PIRSF" id="PIRSF002158">
    <property type="entry name" value="Ribosomal_L2"/>
    <property type="match status" value="1"/>
</dbReference>
<dbReference type="SMART" id="SM01383">
    <property type="entry name" value="Ribosomal_L2"/>
    <property type="match status" value="1"/>
</dbReference>
<dbReference type="SMART" id="SM01382">
    <property type="entry name" value="Ribosomal_L2_C"/>
    <property type="match status" value="1"/>
</dbReference>
<dbReference type="SUPFAM" id="SSF50249">
    <property type="entry name" value="Nucleic acid-binding proteins"/>
    <property type="match status" value="1"/>
</dbReference>
<dbReference type="SUPFAM" id="SSF50104">
    <property type="entry name" value="Translation proteins SH3-like domain"/>
    <property type="match status" value="1"/>
</dbReference>
<dbReference type="PROSITE" id="PS00467">
    <property type="entry name" value="RIBOSOMAL_L2"/>
    <property type="match status" value="1"/>
</dbReference>
<proteinExistence type="evidence at transcript level"/>
<evidence type="ECO:0000250" key="1">
    <source>
        <dbReference type="UniProtKB" id="P62917"/>
    </source>
</evidence>
<evidence type="ECO:0000256" key="2">
    <source>
        <dbReference type="SAM" id="MobiDB-lite"/>
    </source>
</evidence>
<evidence type="ECO:0000305" key="3"/>
<evidence type="ECO:0000312" key="4">
    <source>
        <dbReference type="EMBL" id="BAA21969.1"/>
    </source>
</evidence>
<evidence type="ECO:0000312" key="5">
    <source>
        <dbReference type="EMBL" id="BAN39383.1"/>
    </source>
</evidence>
<evidence type="ECO:0000312" key="6">
    <source>
        <dbReference type="EMBL" id="EAL50459.1"/>
    </source>
</evidence>